<gene>
    <name type="primary">NOP9</name>
    <name type="ordered locus">YJL010C</name>
    <name type="ORF">J1357</name>
</gene>
<protein>
    <recommendedName>
        <fullName>Nucleolar protein 9</fullName>
    </recommendedName>
    <alternativeName>
        <fullName>Pumilio domain-containing protein NOP9</fullName>
    </alternativeName>
</protein>
<feature type="chain" id="PRO_0000075939" description="Nucleolar protein 9">
    <location>
        <begin position="1"/>
        <end position="666"/>
    </location>
</feature>
<feature type="domain" description="PUM-HD">
    <location>
        <begin position="23"/>
        <end position="435"/>
    </location>
</feature>
<feature type="repeat" description="Pumilio 1">
    <location>
        <begin position="92"/>
        <end position="127"/>
    </location>
</feature>
<feature type="repeat" description="Pumilio 2">
    <location>
        <begin position="128"/>
        <end position="163"/>
    </location>
</feature>
<feature type="repeat" description="Pumilio 3">
    <location>
        <begin position="188"/>
        <end position="223"/>
    </location>
</feature>
<feature type="repeat" description="Pumilio 4">
    <location>
        <begin position="286"/>
        <end position="326"/>
    </location>
</feature>
<feature type="repeat" description="Pumilio 5">
    <location>
        <begin position="334"/>
        <end position="368"/>
    </location>
</feature>
<feature type="repeat" description="Pumilio 6">
    <location>
        <begin position="369"/>
        <end position="407"/>
    </location>
</feature>
<feature type="repeat" description="Pumilio 7">
    <location>
        <begin position="511"/>
        <end position="548"/>
    </location>
</feature>
<feature type="repeat" description="Pumilio 8">
    <location>
        <begin position="549"/>
        <end position="587"/>
    </location>
</feature>
<feature type="region of interest" description="Disordered" evidence="1">
    <location>
        <begin position="1"/>
        <end position="40"/>
    </location>
</feature>
<feature type="region of interest" description="Disordered" evidence="1">
    <location>
        <begin position="635"/>
        <end position="666"/>
    </location>
</feature>
<feature type="compositionally biased region" description="Basic residues" evidence="1">
    <location>
        <begin position="1"/>
        <end position="14"/>
    </location>
</feature>
<feature type="compositionally biased region" description="Basic and acidic residues" evidence="1">
    <location>
        <begin position="642"/>
        <end position="653"/>
    </location>
</feature>
<feature type="helix" evidence="7">
    <location>
        <begin position="58"/>
        <end position="73"/>
    </location>
</feature>
<feature type="helix" evidence="7">
    <location>
        <begin position="79"/>
        <end position="93"/>
    </location>
</feature>
<feature type="turn" evidence="7">
    <location>
        <begin position="94"/>
        <end position="96"/>
    </location>
</feature>
<feature type="helix" evidence="7">
    <location>
        <begin position="97"/>
        <end position="102"/>
    </location>
</feature>
<feature type="turn" evidence="7">
    <location>
        <begin position="104"/>
        <end position="106"/>
    </location>
</feature>
<feature type="helix" evidence="7">
    <location>
        <begin position="107"/>
        <end position="116"/>
    </location>
</feature>
<feature type="helix" evidence="7">
    <location>
        <begin position="119"/>
        <end position="127"/>
    </location>
</feature>
<feature type="turn" evidence="7">
    <location>
        <begin position="128"/>
        <end position="131"/>
    </location>
</feature>
<feature type="helix" evidence="7">
    <location>
        <begin position="133"/>
        <end position="137"/>
    </location>
</feature>
<feature type="helix" evidence="7">
    <location>
        <begin position="142"/>
        <end position="159"/>
    </location>
</feature>
<feature type="helix" evidence="7">
    <location>
        <begin position="178"/>
        <end position="189"/>
    </location>
</feature>
<feature type="helix" evidence="7">
    <location>
        <begin position="190"/>
        <end position="192"/>
    </location>
</feature>
<feature type="helix" evidence="7">
    <location>
        <begin position="193"/>
        <end position="197"/>
    </location>
</feature>
<feature type="helix" evidence="7">
    <location>
        <begin position="202"/>
        <end position="213"/>
    </location>
</feature>
<feature type="helix" evidence="7">
    <location>
        <begin position="256"/>
        <end position="273"/>
    </location>
</feature>
<feature type="strand" evidence="7">
    <location>
        <begin position="278"/>
        <end position="282"/>
    </location>
</feature>
<feature type="helix" evidence="7">
    <location>
        <begin position="287"/>
        <end position="295"/>
    </location>
</feature>
<feature type="turn" evidence="7">
    <location>
        <begin position="298"/>
        <end position="300"/>
    </location>
</feature>
<feature type="helix" evidence="7">
    <location>
        <begin position="301"/>
        <end position="310"/>
    </location>
</feature>
<feature type="helix" evidence="7">
    <location>
        <begin position="311"/>
        <end position="313"/>
    </location>
</feature>
<feature type="helix" evidence="7">
    <location>
        <begin position="319"/>
        <end position="324"/>
    </location>
</feature>
<feature type="strand" evidence="7">
    <location>
        <begin position="328"/>
        <end position="330"/>
    </location>
</feature>
<feature type="helix" evidence="7">
    <location>
        <begin position="333"/>
        <end position="342"/>
    </location>
</feature>
<feature type="helix" evidence="7">
    <location>
        <begin position="346"/>
        <end position="356"/>
    </location>
</feature>
<feature type="helix" evidence="7">
    <location>
        <begin position="361"/>
        <end position="371"/>
    </location>
</feature>
<feature type="helix" evidence="7">
    <location>
        <begin position="373"/>
        <end position="375"/>
    </location>
</feature>
<feature type="helix" evidence="7">
    <location>
        <begin position="376"/>
        <end position="380"/>
    </location>
</feature>
<feature type="turn" evidence="7">
    <location>
        <begin position="383"/>
        <end position="385"/>
    </location>
</feature>
<feature type="helix" evidence="7">
    <location>
        <begin position="386"/>
        <end position="396"/>
    </location>
</feature>
<feature type="helix" evidence="7">
    <location>
        <begin position="399"/>
        <end position="409"/>
    </location>
</feature>
<feature type="helix" evidence="7">
    <location>
        <begin position="410"/>
        <end position="412"/>
    </location>
</feature>
<feature type="helix" evidence="7">
    <location>
        <begin position="413"/>
        <end position="419"/>
    </location>
</feature>
<feature type="helix" evidence="7">
    <location>
        <begin position="421"/>
        <end position="433"/>
    </location>
</feature>
<feature type="turn" evidence="8">
    <location>
        <begin position="434"/>
        <end position="438"/>
    </location>
</feature>
<feature type="helix" evidence="7">
    <location>
        <begin position="439"/>
        <end position="450"/>
    </location>
</feature>
<feature type="strand" evidence="8">
    <location>
        <begin position="455"/>
        <end position="457"/>
    </location>
</feature>
<feature type="helix" evidence="7">
    <location>
        <begin position="460"/>
        <end position="465"/>
    </location>
</feature>
<feature type="helix" evidence="7">
    <location>
        <begin position="467"/>
        <end position="469"/>
    </location>
</feature>
<feature type="helix" evidence="7">
    <location>
        <begin position="482"/>
        <end position="497"/>
    </location>
</feature>
<feature type="helix" evidence="7">
    <location>
        <begin position="499"/>
        <end position="511"/>
    </location>
</feature>
<feature type="helix" evidence="7">
    <location>
        <begin position="514"/>
        <end position="521"/>
    </location>
</feature>
<feature type="strand" evidence="9">
    <location>
        <begin position="523"/>
        <end position="525"/>
    </location>
</feature>
<feature type="helix" evidence="7">
    <location>
        <begin position="526"/>
        <end position="533"/>
    </location>
</feature>
<feature type="helix" evidence="7">
    <location>
        <begin position="536"/>
        <end position="538"/>
    </location>
</feature>
<feature type="helix" evidence="7">
    <location>
        <begin position="541"/>
        <end position="551"/>
    </location>
</feature>
<feature type="helix" evidence="7">
    <location>
        <begin position="552"/>
        <end position="554"/>
    </location>
</feature>
<feature type="helix" evidence="7">
    <location>
        <begin position="555"/>
        <end position="559"/>
    </location>
</feature>
<feature type="helix" evidence="7">
    <location>
        <begin position="564"/>
        <end position="574"/>
    </location>
</feature>
<feature type="turn" evidence="7">
    <location>
        <begin position="575"/>
        <end position="577"/>
    </location>
</feature>
<feature type="helix" evidence="7">
    <location>
        <begin position="579"/>
        <end position="591"/>
    </location>
</feature>
<feature type="helix" evidence="7">
    <location>
        <begin position="593"/>
        <end position="597"/>
    </location>
</feature>
<feature type="helix" evidence="7">
    <location>
        <begin position="600"/>
        <end position="608"/>
    </location>
</feature>
<feature type="helix" evidence="7">
    <location>
        <begin position="611"/>
        <end position="616"/>
    </location>
</feature>
<feature type="helix" evidence="7">
    <location>
        <begin position="618"/>
        <end position="632"/>
    </location>
</feature>
<sequence>MGKTKTRGRRHQDKQRKDEFEPSSNSAKEHIQQEESTYNDEAEIKETQPQMFFGVLDREELEYFKQAESTLQLDAFEAPEEKFQFVTSIIEEAKGKELKLVTSQITSKLMERVILECDETQLKDIFQSFNGVFFGLSCHKYASHVLETLFVRSAALVERELLTPSFDNNEKEGPYVTMENMFLFMLNELKPHLKTMMNHQYASHVLRLLILILSSKTLPNSTKANSTLRSKKSKIARKMIDIKDNDDFNKVYQTPESFKSELRDIITTLYKGFTNGAESRSDISQSTITKFREYSVDKVASPVIQLIIQVEGIFDRDRSFWRLVFNTADEKDPKEESFLEYLLSDPVGSHFLENVIGSARLKYVERLYRLYMKDRIVKLAKRDTTGAFVVRALLEHLKEKDVKQILDAVVPELSMLLNSNMDFGTAIINASNKQGGYLRDDVIAQLIQKYYPEKSDAKNILESCLLLSASTLGNTRDDWPTAEERRRSVFLEQLIDYDDKFLNITIDSMLALPEERLIQMCYHGVFSHVVEHVLQTTRVDIIKRKMLLNILSKESVNLACNVYGSHIMDKLWEFTAKLTLYKERIARALVLETEKVKNSIYGRQVWKNWKLELYVRKMWDWKKLIKEQEFEIFPNSKPLQPKPEKHSRERNNSKEGSAFKKQKHYR</sequence>
<accession>P47077</accession>
<accession>D6VWG7</accession>
<comment type="function">
    <text evidence="4 5">RNA-binding nucleolar protein required for pre-rRNA processing. Component of the 90S pre-ribosome involved in production of 18S rRNA and assembly of small ribosomal subunit. Component of the pre-40S ribosome required for release from the nucleolus.</text>
</comment>
<comment type="subunit">
    <text evidence="5">Component of the 90S pre-ribosome. Component of the pre-40S ribosome.</text>
</comment>
<comment type="subcellular location">
    <subcellularLocation>
        <location evidence="2 5">Nucleus</location>
        <location evidence="2 5">Nucleolus</location>
    </subcellularLocation>
</comment>
<comment type="miscellaneous">
    <text evidence="3">Present with 2930 molecules/cell in log phase SD medium.</text>
</comment>
<comment type="similarity">
    <text evidence="6">Belongs to the NOP9 family.</text>
</comment>
<organism>
    <name type="scientific">Saccharomyces cerevisiae (strain ATCC 204508 / S288c)</name>
    <name type="common">Baker's yeast</name>
    <dbReference type="NCBI Taxonomy" id="559292"/>
    <lineage>
        <taxon>Eukaryota</taxon>
        <taxon>Fungi</taxon>
        <taxon>Dikarya</taxon>
        <taxon>Ascomycota</taxon>
        <taxon>Saccharomycotina</taxon>
        <taxon>Saccharomycetes</taxon>
        <taxon>Saccharomycetales</taxon>
        <taxon>Saccharomycetaceae</taxon>
        <taxon>Saccharomyces</taxon>
    </lineage>
</organism>
<name>NOP9_YEAST</name>
<dbReference type="EMBL" id="Z49285">
    <property type="protein sequence ID" value="CAA89301.1"/>
    <property type="molecule type" value="Genomic_DNA"/>
</dbReference>
<dbReference type="EMBL" id="BK006943">
    <property type="protein sequence ID" value="DAA08783.1"/>
    <property type="molecule type" value="Genomic_DNA"/>
</dbReference>
<dbReference type="PIR" id="S56781">
    <property type="entry name" value="S56781"/>
</dbReference>
<dbReference type="RefSeq" id="NP_012524.3">
    <property type="nucleotide sequence ID" value="NM_001181444.3"/>
</dbReference>
<dbReference type="PDB" id="5SVD">
    <property type="method" value="X-ray"/>
    <property type="resolution" value="2.10 A"/>
    <property type="chains" value="A/B=46-645"/>
</dbReference>
<dbReference type="PDB" id="5WTX">
    <property type="method" value="X-ray"/>
    <property type="resolution" value="3.07 A"/>
    <property type="chains" value="A=1-666"/>
</dbReference>
<dbReference type="PDB" id="5WTY">
    <property type="method" value="X-ray"/>
    <property type="resolution" value="2.79 A"/>
    <property type="chains" value="A/B=53-634"/>
</dbReference>
<dbReference type="PDB" id="6WPI">
    <property type="method" value="X-ray"/>
    <property type="resolution" value="3.02 A"/>
    <property type="chains" value="A=46-163, A=176-645"/>
</dbReference>
<dbReference type="PDBsum" id="5SVD"/>
<dbReference type="PDBsum" id="5WTX"/>
<dbReference type="PDBsum" id="5WTY"/>
<dbReference type="PDBsum" id="6WPI"/>
<dbReference type="SMR" id="P47077"/>
<dbReference type="BioGRID" id="33747">
    <property type="interactions" value="276"/>
</dbReference>
<dbReference type="DIP" id="DIP-5668N"/>
<dbReference type="FunCoup" id="P47077">
    <property type="interactions" value="1061"/>
</dbReference>
<dbReference type="IntAct" id="P47077">
    <property type="interactions" value="16"/>
</dbReference>
<dbReference type="MINT" id="P47077"/>
<dbReference type="STRING" id="4932.YJL010C"/>
<dbReference type="iPTMnet" id="P47077"/>
<dbReference type="PaxDb" id="4932-YJL010C"/>
<dbReference type="PeptideAtlas" id="P47077"/>
<dbReference type="EnsemblFungi" id="YJL010C_mRNA">
    <property type="protein sequence ID" value="YJL010C"/>
    <property type="gene ID" value="YJL010C"/>
</dbReference>
<dbReference type="GeneID" id="853445"/>
<dbReference type="KEGG" id="sce:YJL010C"/>
<dbReference type="AGR" id="SGD:S000003547"/>
<dbReference type="SGD" id="S000003547">
    <property type="gene designation" value="NOP9"/>
</dbReference>
<dbReference type="VEuPathDB" id="FungiDB:YJL010C"/>
<dbReference type="eggNOG" id="KOG2188">
    <property type="taxonomic scope" value="Eukaryota"/>
</dbReference>
<dbReference type="GeneTree" id="ENSGT00390000004964"/>
<dbReference type="HOGENOM" id="CLU_008720_1_1_1"/>
<dbReference type="InParanoid" id="P47077"/>
<dbReference type="OMA" id="HHLVRNF"/>
<dbReference type="OrthoDB" id="392571at2759"/>
<dbReference type="BioCyc" id="YEAST:G3O-31486-MONOMER"/>
<dbReference type="BioGRID-ORCS" id="853445">
    <property type="hits" value="1 hit in 10 CRISPR screens"/>
</dbReference>
<dbReference type="PRO" id="PR:P47077"/>
<dbReference type="Proteomes" id="UP000002311">
    <property type="component" value="Chromosome X"/>
</dbReference>
<dbReference type="RNAct" id="P47077">
    <property type="molecule type" value="protein"/>
</dbReference>
<dbReference type="GO" id="GO:0030686">
    <property type="term" value="C:90S preribosome"/>
    <property type="evidence" value="ECO:0000314"/>
    <property type="project" value="SGD"/>
</dbReference>
<dbReference type="GO" id="GO:0005730">
    <property type="term" value="C:nucleolus"/>
    <property type="evidence" value="ECO:0000314"/>
    <property type="project" value="SGD"/>
</dbReference>
<dbReference type="GO" id="GO:0005634">
    <property type="term" value="C:nucleus"/>
    <property type="evidence" value="ECO:0007005"/>
    <property type="project" value="SGD"/>
</dbReference>
<dbReference type="GO" id="GO:0030688">
    <property type="term" value="C:preribosome, small subunit precursor"/>
    <property type="evidence" value="ECO:0000314"/>
    <property type="project" value="SGD"/>
</dbReference>
<dbReference type="GO" id="GO:0032040">
    <property type="term" value="C:small-subunit processome"/>
    <property type="evidence" value="ECO:0000353"/>
    <property type="project" value="ComplexPortal"/>
</dbReference>
<dbReference type="GO" id="GO:0003729">
    <property type="term" value="F:mRNA binding"/>
    <property type="evidence" value="ECO:0007005"/>
    <property type="project" value="SGD"/>
</dbReference>
<dbReference type="GO" id="GO:0003723">
    <property type="term" value="F:RNA binding"/>
    <property type="evidence" value="ECO:0000314"/>
    <property type="project" value="SGD"/>
</dbReference>
<dbReference type="GO" id="GO:0000480">
    <property type="term" value="P:endonucleolytic cleavage in 5'-ETS of tricistronic rRNA transcript (SSU-rRNA, 5.8S rRNA, LSU-rRNA)"/>
    <property type="evidence" value="ECO:0000315"/>
    <property type="project" value="SGD"/>
</dbReference>
<dbReference type="GO" id="GO:0000447">
    <property type="term" value="P:endonucleolytic cleavage in ITS1 to separate SSU-rRNA from 5.8S rRNA and LSU-rRNA from tricistronic rRNA transcript (SSU-rRNA, 5.8S rRNA, LSU-rRNA)"/>
    <property type="evidence" value="ECO:0000315"/>
    <property type="project" value="SGD"/>
</dbReference>
<dbReference type="GO" id="GO:0000472">
    <property type="term" value="P:endonucleolytic cleavage to generate mature 5'-end of SSU-rRNA from (SSU-rRNA, 5.8S rRNA, LSU-rRNA)"/>
    <property type="evidence" value="ECO:0000315"/>
    <property type="project" value="SGD"/>
</dbReference>
<dbReference type="GO" id="GO:0030490">
    <property type="term" value="P:maturation of SSU-rRNA"/>
    <property type="evidence" value="ECO:0000303"/>
    <property type="project" value="ComplexPortal"/>
</dbReference>
<dbReference type="GO" id="GO:0000056">
    <property type="term" value="P:ribosomal small subunit export from nucleus"/>
    <property type="evidence" value="ECO:0000315"/>
    <property type="project" value="SGD"/>
</dbReference>
<dbReference type="FunFam" id="1.25.10.10:FF:000647">
    <property type="entry name" value="Nucleolar protein 9"/>
    <property type="match status" value="1"/>
</dbReference>
<dbReference type="FunFam" id="1.25.10.10:FF:000684">
    <property type="entry name" value="Nucleolar protein 9"/>
    <property type="match status" value="1"/>
</dbReference>
<dbReference type="Gene3D" id="1.25.10.10">
    <property type="entry name" value="Leucine-rich Repeat Variant"/>
    <property type="match status" value="3"/>
</dbReference>
<dbReference type="InterPro" id="IPR011989">
    <property type="entry name" value="ARM-like"/>
</dbReference>
<dbReference type="InterPro" id="IPR016024">
    <property type="entry name" value="ARM-type_fold"/>
</dbReference>
<dbReference type="InterPro" id="IPR040000">
    <property type="entry name" value="NOP9"/>
</dbReference>
<dbReference type="InterPro" id="IPR001313">
    <property type="entry name" value="Pumilio_RNA-bd_rpt"/>
</dbReference>
<dbReference type="PANTHER" id="PTHR13102">
    <property type="entry name" value="NUCLEOLAR PROTEIN 9"/>
    <property type="match status" value="1"/>
</dbReference>
<dbReference type="PANTHER" id="PTHR13102:SF0">
    <property type="entry name" value="NUCLEOLAR PROTEIN 9"/>
    <property type="match status" value="1"/>
</dbReference>
<dbReference type="Pfam" id="PF22493">
    <property type="entry name" value="PUF_NOP9"/>
    <property type="match status" value="1"/>
</dbReference>
<dbReference type="SMART" id="SM00025">
    <property type="entry name" value="Pumilio"/>
    <property type="match status" value="8"/>
</dbReference>
<dbReference type="SUPFAM" id="SSF48371">
    <property type="entry name" value="ARM repeat"/>
    <property type="match status" value="1"/>
</dbReference>
<evidence type="ECO:0000256" key="1">
    <source>
        <dbReference type="SAM" id="MobiDB-lite"/>
    </source>
</evidence>
<evidence type="ECO:0000269" key="2">
    <source>
    </source>
</evidence>
<evidence type="ECO:0000269" key="3">
    <source>
    </source>
</evidence>
<evidence type="ECO:0000269" key="4">
    <source>
    </source>
</evidence>
<evidence type="ECO:0000269" key="5">
    <source>
    </source>
</evidence>
<evidence type="ECO:0000305" key="6"/>
<evidence type="ECO:0007829" key="7">
    <source>
        <dbReference type="PDB" id="5SVD"/>
    </source>
</evidence>
<evidence type="ECO:0007829" key="8">
    <source>
        <dbReference type="PDB" id="5WTY"/>
    </source>
</evidence>
<evidence type="ECO:0007829" key="9">
    <source>
        <dbReference type="PDB" id="6WPI"/>
    </source>
</evidence>
<keyword id="KW-0002">3D-structure</keyword>
<keyword id="KW-0539">Nucleus</keyword>
<keyword id="KW-1185">Reference proteome</keyword>
<keyword id="KW-0677">Repeat</keyword>
<keyword id="KW-0690">Ribosome biogenesis</keyword>
<keyword id="KW-0698">rRNA processing</keyword>
<proteinExistence type="evidence at protein level"/>
<reference key="1">
    <citation type="journal article" date="1996" name="EMBO J.">
        <title>Complete nucleotide sequence of Saccharomyces cerevisiae chromosome X.</title>
        <authorList>
            <person name="Galibert F."/>
            <person name="Alexandraki D."/>
            <person name="Baur A."/>
            <person name="Boles E."/>
            <person name="Chalwatzis N."/>
            <person name="Chuat J.-C."/>
            <person name="Coster F."/>
            <person name="Cziepluch C."/>
            <person name="de Haan M."/>
            <person name="Domdey H."/>
            <person name="Durand P."/>
            <person name="Entian K.-D."/>
            <person name="Gatius M."/>
            <person name="Goffeau A."/>
            <person name="Grivell L.A."/>
            <person name="Hennemann A."/>
            <person name="Herbert C.J."/>
            <person name="Heumann K."/>
            <person name="Hilger F."/>
            <person name="Hollenberg C.P."/>
            <person name="Huang M.-E."/>
            <person name="Jacq C."/>
            <person name="Jauniaux J.-C."/>
            <person name="Katsoulou C."/>
            <person name="Kirchrath L."/>
            <person name="Kleine K."/>
            <person name="Kordes E."/>
            <person name="Koetter P."/>
            <person name="Liebl S."/>
            <person name="Louis E.J."/>
            <person name="Manus V."/>
            <person name="Mewes H.-W."/>
            <person name="Miosga T."/>
            <person name="Obermaier B."/>
            <person name="Perea J."/>
            <person name="Pohl T.M."/>
            <person name="Portetelle D."/>
            <person name="Pujol A."/>
            <person name="Purnelle B."/>
            <person name="Ramezani Rad M."/>
            <person name="Rasmussen S.W."/>
            <person name="Rose M."/>
            <person name="Rossau R."/>
            <person name="Schaaff-Gerstenschlaeger I."/>
            <person name="Smits P.H.M."/>
            <person name="Scarcez T."/>
            <person name="Soriano N."/>
            <person name="To Van D."/>
            <person name="Tzermia M."/>
            <person name="Van Broekhoven A."/>
            <person name="Vandenbol M."/>
            <person name="Wedler H."/>
            <person name="von Wettstein D."/>
            <person name="Wambutt R."/>
            <person name="Zagulski M."/>
            <person name="Zollner A."/>
            <person name="Karpfinger-Hartl L."/>
        </authorList>
    </citation>
    <scope>NUCLEOTIDE SEQUENCE [LARGE SCALE GENOMIC DNA]</scope>
    <source>
        <strain>ATCC 204508 / S288c</strain>
    </source>
</reference>
<reference key="2">
    <citation type="journal article" date="2014" name="G3 (Bethesda)">
        <title>The reference genome sequence of Saccharomyces cerevisiae: Then and now.</title>
        <authorList>
            <person name="Engel S.R."/>
            <person name="Dietrich F.S."/>
            <person name="Fisk D.G."/>
            <person name="Binkley G."/>
            <person name="Balakrishnan R."/>
            <person name="Costanzo M.C."/>
            <person name="Dwight S.S."/>
            <person name="Hitz B.C."/>
            <person name="Karra K."/>
            <person name="Nash R.S."/>
            <person name="Weng S."/>
            <person name="Wong E.D."/>
            <person name="Lloyd P."/>
            <person name="Skrzypek M.S."/>
            <person name="Miyasato S.R."/>
            <person name="Simison M."/>
            <person name="Cherry J.M."/>
        </authorList>
    </citation>
    <scope>GENOME REANNOTATION</scope>
    <source>
        <strain>ATCC 204508 / S288c</strain>
    </source>
</reference>
<reference key="3">
    <citation type="journal article" date="2003" name="Mol. Cell">
        <title>Assigning function to yeast proteins by integration of technologies.</title>
        <authorList>
            <person name="Hazbun T.R."/>
            <person name="Malmstroem L."/>
            <person name="Anderson S."/>
            <person name="Graczyk B.J."/>
            <person name="Fox B."/>
            <person name="Riffle M."/>
            <person name="Sundin B.A."/>
            <person name="Aranda J.D."/>
            <person name="McDonald W.H."/>
            <person name="Chiu C.-H."/>
            <person name="Snydsman B.E."/>
            <person name="Bradley P."/>
            <person name="Muller E.G.D."/>
            <person name="Fields S."/>
            <person name="Baker D."/>
            <person name="Yates J.R. III"/>
            <person name="Davis T.N."/>
        </authorList>
    </citation>
    <scope>IDENTIFICATION BY MASS SPECTROMETRY</scope>
</reference>
<reference key="4">
    <citation type="journal article" date="2003" name="Nature">
        <title>Global analysis of protein localization in budding yeast.</title>
        <authorList>
            <person name="Huh W.-K."/>
            <person name="Falvo J.V."/>
            <person name="Gerke L.C."/>
            <person name="Carroll A.S."/>
            <person name="Howson R.W."/>
            <person name="Weissman J.S."/>
            <person name="O'Shea E.K."/>
        </authorList>
    </citation>
    <scope>SUBCELLULAR LOCATION [LARGE SCALE ANALYSIS]</scope>
</reference>
<reference key="5">
    <citation type="journal article" date="2003" name="Nature">
        <title>Global analysis of protein expression in yeast.</title>
        <authorList>
            <person name="Ghaemmaghami S."/>
            <person name="Huh W.-K."/>
            <person name="Bower K."/>
            <person name="Howson R.W."/>
            <person name="Belle A."/>
            <person name="Dephoure N."/>
            <person name="O'Shea E.K."/>
            <person name="Weissman J.S."/>
        </authorList>
    </citation>
    <scope>LEVEL OF PROTEIN EXPRESSION [LARGE SCALE ANALYSIS]</scope>
</reference>
<reference key="6">
    <citation type="journal article" date="2006" name="Yeast">
        <title>The budding yeast rRNA and ribosome biosynthesis (RRB) regulon contains over 200 genes.</title>
        <authorList>
            <person name="Wade C.H."/>
            <person name="Umbarger M.A."/>
            <person name="McAlear M.A."/>
        </authorList>
    </citation>
    <scope>FUNCTION</scope>
</reference>
<reference key="7">
    <citation type="journal article" date="2007" name="RNA">
        <title>Nop9 is an RNA binding protein present in pre-40S ribosomes and required for 18S rRNA synthesis in yeast.</title>
        <authorList>
            <person name="Thomson E."/>
            <person name="Rappsilber J."/>
            <person name="Tollervey D."/>
        </authorList>
    </citation>
    <scope>IDENTIFICATION IN THE 90S PRE-RIBOSOME</scope>
    <scope>IDENTIFICATION IN THE PRE-40S RIBOSOME</scope>
    <scope>FUNCTION</scope>
    <scope>RNA-BINDING</scope>
    <scope>SUBCELLULAR LOCATION</scope>
</reference>